<accession>Q9F4E2</accession>
<reference key="1">
    <citation type="journal article" date="2000" name="Proc. Natl. Acad. Sci. U.S.A.">
        <title>Post-symbiotic plasmid acquisition and evolution of the repA1-replicon in Buchnera aphidicola.</title>
        <authorList>
            <person name="Van Ham R.C.H.J."/>
            <person name="Gonzalez-Candelas F."/>
            <person name="Silva F.J."/>
            <person name="Sabater B."/>
            <person name="Moya A."/>
            <person name="Latorre A."/>
        </authorList>
    </citation>
    <scope>NUCLEOTIDE SEQUENCE [GENOMIC DNA]</scope>
</reference>
<keyword id="KW-1003">Cell membrane</keyword>
<keyword id="KW-0472">Membrane</keyword>
<keyword id="KW-0614">Plasmid</keyword>
<keyword id="KW-0812">Transmembrane</keyword>
<keyword id="KW-1133">Transmembrane helix</keyword>
<proteinExistence type="inferred from homology"/>
<organism>
    <name type="scientific">Buchnera aphidicola subsp. Geoica urticularia</name>
    <dbReference type="NCBI Taxonomy" id="98801"/>
    <lineage>
        <taxon>Bacteria</taxon>
        <taxon>Pseudomonadati</taxon>
        <taxon>Pseudomonadota</taxon>
        <taxon>Gammaproteobacteria</taxon>
        <taxon>Enterobacterales</taxon>
        <taxon>Erwiniaceae</taxon>
        <taxon>Buchnera</taxon>
    </lineage>
</organism>
<comment type="subcellular location">
    <subcellularLocation>
        <location evidence="1">Cell membrane</location>
        <topology evidence="1">Multi-pass membrane protein</topology>
    </subcellularLocation>
</comment>
<comment type="similarity">
    <text evidence="1">Belongs to the UPF0114 family.</text>
</comment>
<evidence type="ECO:0000255" key="1">
    <source>
        <dbReference type="HAMAP-Rule" id="MF_00143"/>
    </source>
</evidence>
<feature type="chain" id="PRO_0000214386" description="UPF0114 protein in repA1-repA2 intergenic region">
    <location>
        <begin position="1"/>
        <end position="165"/>
    </location>
</feature>
<feature type="transmembrane region" description="Helical" evidence="1">
    <location>
        <begin position="10"/>
        <end position="32"/>
    </location>
</feature>
<feature type="transmembrane region" description="Helical" evidence="1">
    <location>
        <begin position="53"/>
        <end position="75"/>
    </location>
</feature>
<feature type="transmembrane region" description="Helical" evidence="1">
    <location>
        <begin position="136"/>
        <end position="155"/>
    </location>
</feature>
<name>YREP_BUCGU</name>
<geneLocation type="plasmid">
    <name>pBGu1</name>
</geneLocation>
<protein>
    <recommendedName>
        <fullName evidence="1">UPF0114 protein in repA1-repA2 intergenic region</fullName>
    </recommendedName>
</protein>
<sequence>MEKLIEKIIYASRWLMFPVYIGLSFGFILLTLKFFQQIILVIPKILIMSESGLILIVLSLIDIALVGGLLVMVMFSGYENFISKMEINVDKKKLGWMGTMDVNSIKNKVASSIVAISSVHLLRLFMDADKISNDKIMWCVIIHLTFVLSAFGMACIDKMSKKNYS</sequence>
<dbReference type="EMBL" id="AJ404863">
    <property type="protein sequence ID" value="CAC10485.1"/>
    <property type="molecule type" value="Genomic_DNA"/>
</dbReference>
<dbReference type="GO" id="GO:0005886">
    <property type="term" value="C:plasma membrane"/>
    <property type="evidence" value="ECO:0007669"/>
    <property type="project" value="UniProtKB-SubCell"/>
</dbReference>
<dbReference type="HAMAP" id="MF_00143">
    <property type="entry name" value="UPF0114"/>
    <property type="match status" value="1"/>
</dbReference>
<dbReference type="InterPro" id="IPR005134">
    <property type="entry name" value="UPF0114"/>
</dbReference>
<dbReference type="InterPro" id="IPR020761">
    <property type="entry name" value="UPF0114_bac"/>
</dbReference>
<dbReference type="NCBIfam" id="TIGR00645">
    <property type="entry name" value="HI0507"/>
    <property type="match status" value="1"/>
</dbReference>
<dbReference type="PANTHER" id="PTHR38596">
    <property type="entry name" value="UPF0114 PROTEIN YQHA"/>
    <property type="match status" value="1"/>
</dbReference>
<dbReference type="PANTHER" id="PTHR38596:SF1">
    <property type="entry name" value="UPF0114 PROTEIN YQHA"/>
    <property type="match status" value="1"/>
</dbReference>
<dbReference type="Pfam" id="PF03350">
    <property type="entry name" value="UPF0114"/>
    <property type="match status" value="1"/>
</dbReference>